<comment type="function">
    <text evidence="1">Binds the lower part of the 30S subunit head. Binds mRNA in the 70S ribosome, positioning it for translation.</text>
</comment>
<comment type="subunit">
    <text evidence="1">Part of the 30S ribosomal subunit. Forms a tight complex with proteins S10 and S14.</text>
</comment>
<comment type="similarity">
    <text evidence="1">Belongs to the universal ribosomal protein uS3 family.</text>
</comment>
<organism>
    <name type="scientific">Roseiflexus sp. (strain RS-1)</name>
    <dbReference type="NCBI Taxonomy" id="357808"/>
    <lineage>
        <taxon>Bacteria</taxon>
        <taxon>Bacillati</taxon>
        <taxon>Chloroflexota</taxon>
        <taxon>Chloroflexia</taxon>
        <taxon>Chloroflexales</taxon>
        <taxon>Roseiflexineae</taxon>
        <taxon>Roseiflexaceae</taxon>
        <taxon>Roseiflexus</taxon>
    </lineage>
</organism>
<keyword id="KW-0687">Ribonucleoprotein</keyword>
<keyword id="KW-0689">Ribosomal protein</keyword>
<keyword id="KW-0694">RNA-binding</keyword>
<keyword id="KW-0699">rRNA-binding</keyword>
<sequence>MGRKVHPIGFRLGYIKDWQSKWFAERNYTELLHEDVMLRKIIAKELENAGVARIEIERSANKVEVTVYTAKPGIVIGKRGAKVDELRAELEKRTGKKVKLNIQEIHQPELEAQLVAESIAEQINKRVSYKRAMKQAVQRAMRLGAQGVKIKCSGRLAGAEMARVAWERDGRVPLHTLRADIDYAQVHAHTTYGRIGVKVWIYKGEVFPDQKGQTQLPQPAVAAARPGLTVEEEERPQRKGGRGGRGANAGAARGGRGGRSRS</sequence>
<reference key="1">
    <citation type="submission" date="2007-04" db="EMBL/GenBank/DDBJ databases">
        <title>Complete sequence of Roseiflexus sp. RS-1.</title>
        <authorList>
            <consortium name="US DOE Joint Genome Institute"/>
            <person name="Copeland A."/>
            <person name="Lucas S."/>
            <person name="Lapidus A."/>
            <person name="Barry K."/>
            <person name="Detter J.C."/>
            <person name="Glavina del Rio T."/>
            <person name="Hammon N."/>
            <person name="Israni S."/>
            <person name="Dalin E."/>
            <person name="Tice H."/>
            <person name="Pitluck S."/>
            <person name="Chertkov O."/>
            <person name="Brettin T."/>
            <person name="Bruce D."/>
            <person name="Han C."/>
            <person name="Schmutz J."/>
            <person name="Larimer F."/>
            <person name="Land M."/>
            <person name="Hauser L."/>
            <person name="Kyrpides N."/>
            <person name="Mikhailova N."/>
            <person name="Bryant D.A."/>
            <person name="Richardson P."/>
        </authorList>
    </citation>
    <scope>NUCLEOTIDE SEQUENCE [LARGE SCALE GENOMIC DNA]</scope>
    <source>
        <strain>RS-1</strain>
    </source>
</reference>
<protein>
    <recommendedName>
        <fullName evidence="1">Small ribosomal subunit protein uS3</fullName>
    </recommendedName>
    <alternativeName>
        <fullName evidence="3">30S ribosomal protein S3</fullName>
    </alternativeName>
</protein>
<name>RS3_ROSS1</name>
<gene>
    <name evidence="1" type="primary">rpsC</name>
    <name type="ordered locus">RoseRS_1179</name>
</gene>
<accession>A5USI3</accession>
<proteinExistence type="inferred from homology"/>
<dbReference type="EMBL" id="CP000686">
    <property type="protein sequence ID" value="ABQ89586.1"/>
    <property type="molecule type" value="Genomic_DNA"/>
</dbReference>
<dbReference type="SMR" id="A5USI3"/>
<dbReference type="STRING" id="357808.RoseRS_1179"/>
<dbReference type="KEGG" id="rrs:RoseRS_1179"/>
<dbReference type="eggNOG" id="COG0092">
    <property type="taxonomic scope" value="Bacteria"/>
</dbReference>
<dbReference type="HOGENOM" id="CLU_058591_0_2_0"/>
<dbReference type="OrthoDB" id="9806396at2"/>
<dbReference type="Proteomes" id="UP000006554">
    <property type="component" value="Chromosome"/>
</dbReference>
<dbReference type="GO" id="GO:0022627">
    <property type="term" value="C:cytosolic small ribosomal subunit"/>
    <property type="evidence" value="ECO:0007669"/>
    <property type="project" value="TreeGrafter"/>
</dbReference>
<dbReference type="GO" id="GO:0003729">
    <property type="term" value="F:mRNA binding"/>
    <property type="evidence" value="ECO:0007669"/>
    <property type="project" value="UniProtKB-UniRule"/>
</dbReference>
<dbReference type="GO" id="GO:0019843">
    <property type="term" value="F:rRNA binding"/>
    <property type="evidence" value="ECO:0007669"/>
    <property type="project" value="UniProtKB-UniRule"/>
</dbReference>
<dbReference type="GO" id="GO:0003735">
    <property type="term" value="F:structural constituent of ribosome"/>
    <property type="evidence" value="ECO:0007669"/>
    <property type="project" value="InterPro"/>
</dbReference>
<dbReference type="GO" id="GO:0006412">
    <property type="term" value="P:translation"/>
    <property type="evidence" value="ECO:0007669"/>
    <property type="project" value="UniProtKB-UniRule"/>
</dbReference>
<dbReference type="CDD" id="cd02412">
    <property type="entry name" value="KH-II_30S_S3"/>
    <property type="match status" value="1"/>
</dbReference>
<dbReference type="FunFam" id="3.30.1140.32:FF:000014">
    <property type="entry name" value="30S ribosomal protein S3"/>
    <property type="match status" value="1"/>
</dbReference>
<dbReference type="FunFam" id="3.30.300.20:FF:000001">
    <property type="entry name" value="30S ribosomal protein S3"/>
    <property type="match status" value="1"/>
</dbReference>
<dbReference type="Gene3D" id="3.30.300.20">
    <property type="match status" value="1"/>
</dbReference>
<dbReference type="Gene3D" id="3.30.1140.32">
    <property type="entry name" value="Ribosomal protein S3, C-terminal domain"/>
    <property type="match status" value="1"/>
</dbReference>
<dbReference type="HAMAP" id="MF_01309_B">
    <property type="entry name" value="Ribosomal_uS3_B"/>
    <property type="match status" value="1"/>
</dbReference>
<dbReference type="InterPro" id="IPR004087">
    <property type="entry name" value="KH_dom"/>
</dbReference>
<dbReference type="InterPro" id="IPR015946">
    <property type="entry name" value="KH_dom-like_a/b"/>
</dbReference>
<dbReference type="InterPro" id="IPR004044">
    <property type="entry name" value="KH_dom_type_2"/>
</dbReference>
<dbReference type="InterPro" id="IPR009019">
    <property type="entry name" value="KH_sf_prok-type"/>
</dbReference>
<dbReference type="InterPro" id="IPR036419">
    <property type="entry name" value="Ribosomal_S3_C_sf"/>
</dbReference>
<dbReference type="InterPro" id="IPR005704">
    <property type="entry name" value="Ribosomal_uS3_bac-typ"/>
</dbReference>
<dbReference type="InterPro" id="IPR001351">
    <property type="entry name" value="Ribosomal_uS3_C"/>
</dbReference>
<dbReference type="InterPro" id="IPR018280">
    <property type="entry name" value="Ribosomal_uS3_CS"/>
</dbReference>
<dbReference type="NCBIfam" id="TIGR01009">
    <property type="entry name" value="rpsC_bact"/>
    <property type="match status" value="1"/>
</dbReference>
<dbReference type="PANTHER" id="PTHR11760">
    <property type="entry name" value="30S/40S RIBOSOMAL PROTEIN S3"/>
    <property type="match status" value="1"/>
</dbReference>
<dbReference type="PANTHER" id="PTHR11760:SF19">
    <property type="entry name" value="SMALL RIBOSOMAL SUBUNIT PROTEIN US3C"/>
    <property type="match status" value="1"/>
</dbReference>
<dbReference type="Pfam" id="PF07650">
    <property type="entry name" value="KH_2"/>
    <property type="match status" value="1"/>
</dbReference>
<dbReference type="Pfam" id="PF00189">
    <property type="entry name" value="Ribosomal_S3_C"/>
    <property type="match status" value="1"/>
</dbReference>
<dbReference type="SMART" id="SM00322">
    <property type="entry name" value="KH"/>
    <property type="match status" value="1"/>
</dbReference>
<dbReference type="SUPFAM" id="SSF54814">
    <property type="entry name" value="Prokaryotic type KH domain (KH-domain type II)"/>
    <property type="match status" value="1"/>
</dbReference>
<dbReference type="SUPFAM" id="SSF54821">
    <property type="entry name" value="Ribosomal protein S3 C-terminal domain"/>
    <property type="match status" value="1"/>
</dbReference>
<dbReference type="PROSITE" id="PS50823">
    <property type="entry name" value="KH_TYPE_2"/>
    <property type="match status" value="1"/>
</dbReference>
<dbReference type="PROSITE" id="PS00548">
    <property type="entry name" value="RIBOSOMAL_S3"/>
    <property type="match status" value="1"/>
</dbReference>
<evidence type="ECO:0000255" key="1">
    <source>
        <dbReference type="HAMAP-Rule" id="MF_01309"/>
    </source>
</evidence>
<evidence type="ECO:0000256" key="2">
    <source>
        <dbReference type="SAM" id="MobiDB-lite"/>
    </source>
</evidence>
<evidence type="ECO:0000305" key="3"/>
<feature type="chain" id="PRO_1000086152" description="Small ribosomal subunit protein uS3">
    <location>
        <begin position="1"/>
        <end position="262"/>
    </location>
</feature>
<feature type="domain" description="KH type-2" evidence="1">
    <location>
        <begin position="38"/>
        <end position="106"/>
    </location>
</feature>
<feature type="region of interest" description="Disordered" evidence="2">
    <location>
        <begin position="211"/>
        <end position="262"/>
    </location>
</feature>
<feature type="compositionally biased region" description="Gly residues" evidence="2">
    <location>
        <begin position="243"/>
        <end position="255"/>
    </location>
</feature>